<protein>
    <recommendedName>
        <fullName>Alpha-keto-acid decarboxylase</fullName>
        <shortName>KDC</shortName>
        <ecNumber>4.1.1.-</ecNumber>
    </recommendedName>
</protein>
<dbReference type="EC" id="4.1.1.-"/>
<dbReference type="EMBL" id="CP000611">
    <property type="protein sequence ID" value="ABQ72591.1"/>
    <property type="molecule type" value="Genomic_DNA"/>
</dbReference>
<dbReference type="SMR" id="A5U0P1"/>
<dbReference type="KEGG" id="mra:MRA_0861"/>
<dbReference type="eggNOG" id="COG3961">
    <property type="taxonomic scope" value="Bacteria"/>
</dbReference>
<dbReference type="HOGENOM" id="CLU_013748_0_2_11"/>
<dbReference type="Proteomes" id="UP000001988">
    <property type="component" value="Chromosome"/>
</dbReference>
<dbReference type="GO" id="GO:0005829">
    <property type="term" value="C:cytosol"/>
    <property type="evidence" value="ECO:0007669"/>
    <property type="project" value="TreeGrafter"/>
</dbReference>
<dbReference type="GO" id="GO:0000287">
    <property type="term" value="F:magnesium ion binding"/>
    <property type="evidence" value="ECO:0007669"/>
    <property type="project" value="InterPro"/>
</dbReference>
<dbReference type="GO" id="GO:0004737">
    <property type="term" value="F:pyruvate decarboxylase activity"/>
    <property type="evidence" value="ECO:0007669"/>
    <property type="project" value="TreeGrafter"/>
</dbReference>
<dbReference type="GO" id="GO:0030976">
    <property type="term" value="F:thiamine pyrophosphate binding"/>
    <property type="evidence" value="ECO:0007669"/>
    <property type="project" value="InterPro"/>
</dbReference>
<dbReference type="GO" id="GO:0000949">
    <property type="term" value="P:aromatic amino acid family catabolic process to alcohol via Ehrlich pathway"/>
    <property type="evidence" value="ECO:0007669"/>
    <property type="project" value="TreeGrafter"/>
</dbReference>
<dbReference type="CDD" id="cd02005">
    <property type="entry name" value="TPP_PDC_IPDC"/>
    <property type="match status" value="1"/>
</dbReference>
<dbReference type="CDD" id="cd07038">
    <property type="entry name" value="TPP_PYR_PDC_IPDC_like"/>
    <property type="match status" value="1"/>
</dbReference>
<dbReference type="FunFam" id="3.40.50.1220:FF:000042">
    <property type="entry name" value="Alpha-keto-acid decarboxylase"/>
    <property type="match status" value="1"/>
</dbReference>
<dbReference type="FunFam" id="3.40.50.970:FF:000019">
    <property type="entry name" value="Pyruvate decarboxylase isozyme"/>
    <property type="match status" value="1"/>
</dbReference>
<dbReference type="FunFam" id="3.40.50.970:FF:000024">
    <property type="entry name" value="Pyruvate decarboxylase isozyme"/>
    <property type="match status" value="1"/>
</dbReference>
<dbReference type="Gene3D" id="3.40.50.970">
    <property type="match status" value="2"/>
</dbReference>
<dbReference type="Gene3D" id="3.40.50.1220">
    <property type="entry name" value="TPP-binding domain"/>
    <property type="match status" value="1"/>
</dbReference>
<dbReference type="InterPro" id="IPR029035">
    <property type="entry name" value="DHS-like_NAD/FAD-binding_dom"/>
</dbReference>
<dbReference type="InterPro" id="IPR012110">
    <property type="entry name" value="PDC/IPDC-like"/>
</dbReference>
<dbReference type="InterPro" id="IPR029061">
    <property type="entry name" value="THDP-binding"/>
</dbReference>
<dbReference type="InterPro" id="IPR012000">
    <property type="entry name" value="Thiamin_PyroP_enz_cen_dom"/>
</dbReference>
<dbReference type="InterPro" id="IPR012001">
    <property type="entry name" value="Thiamin_PyroP_enz_TPP-bd_dom"/>
</dbReference>
<dbReference type="InterPro" id="IPR000399">
    <property type="entry name" value="TPP-bd_CS"/>
</dbReference>
<dbReference type="InterPro" id="IPR011766">
    <property type="entry name" value="TPP_enzyme_TPP-bd"/>
</dbReference>
<dbReference type="InterPro" id="IPR047214">
    <property type="entry name" value="TPP_PDC_IPDC"/>
</dbReference>
<dbReference type="InterPro" id="IPR047213">
    <property type="entry name" value="TPP_PYR_PDC_IPDC-like"/>
</dbReference>
<dbReference type="PANTHER" id="PTHR43452">
    <property type="entry name" value="PYRUVATE DECARBOXYLASE"/>
    <property type="match status" value="1"/>
</dbReference>
<dbReference type="PANTHER" id="PTHR43452:SF30">
    <property type="entry name" value="PYRUVATE DECARBOXYLASE ISOZYME 1-RELATED"/>
    <property type="match status" value="1"/>
</dbReference>
<dbReference type="Pfam" id="PF02775">
    <property type="entry name" value="TPP_enzyme_C"/>
    <property type="match status" value="1"/>
</dbReference>
<dbReference type="Pfam" id="PF00205">
    <property type="entry name" value="TPP_enzyme_M"/>
    <property type="match status" value="1"/>
</dbReference>
<dbReference type="Pfam" id="PF02776">
    <property type="entry name" value="TPP_enzyme_N"/>
    <property type="match status" value="1"/>
</dbReference>
<dbReference type="PIRSF" id="PIRSF036565">
    <property type="entry name" value="Pyruvt_ip_decrb"/>
    <property type="match status" value="1"/>
</dbReference>
<dbReference type="SUPFAM" id="SSF52467">
    <property type="entry name" value="DHS-like NAD/FAD-binding domain"/>
    <property type="match status" value="1"/>
</dbReference>
<dbReference type="SUPFAM" id="SSF52518">
    <property type="entry name" value="Thiamin diphosphate-binding fold (THDP-binding)"/>
    <property type="match status" value="2"/>
</dbReference>
<dbReference type="PROSITE" id="PS00187">
    <property type="entry name" value="TPP_ENZYMES"/>
    <property type="match status" value="1"/>
</dbReference>
<reference key="1">
    <citation type="journal article" date="2008" name="PLoS ONE">
        <title>Genetic basis of virulence attenuation revealed by comparative genomic analysis of Mycobacterium tuberculosis strain H37Ra versus H37Rv.</title>
        <authorList>
            <person name="Zheng H."/>
            <person name="Lu L."/>
            <person name="Wang B."/>
            <person name="Pu S."/>
            <person name="Zhang X."/>
            <person name="Zhu G."/>
            <person name="Shi W."/>
            <person name="Zhang L."/>
            <person name="Wang H."/>
            <person name="Wang S."/>
            <person name="Zhao G."/>
            <person name="Zhang Y."/>
        </authorList>
    </citation>
    <scope>NUCLEOTIDE SEQUENCE [LARGE SCALE GENOMIC DNA]</scope>
    <source>
        <strain>ATCC 25177 / H37Ra</strain>
    </source>
</reference>
<gene>
    <name type="primary">kdc</name>
    <name type="ordered locus">MRA_0861</name>
</gene>
<proteinExistence type="inferred from homology"/>
<comment type="function">
    <text>Decarboxylates branched-chain and aromatic alpha-keto acids to aldehydes.</text>
</comment>
<comment type="cofactor">
    <cofactor evidence="1">
        <name>a metal cation</name>
        <dbReference type="ChEBI" id="CHEBI:25213"/>
    </cofactor>
    <text evidence="1">Binds 1 metal ion per subunit.</text>
</comment>
<comment type="cofactor">
    <cofactor evidence="1">
        <name>thiamine diphosphate</name>
        <dbReference type="ChEBI" id="CHEBI:58937"/>
    </cofactor>
    <text evidence="1">Binds 1 thiamine pyrophosphate per subunit.</text>
</comment>
<comment type="similarity">
    <text evidence="2">Belongs to the TPP enzyme family.</text>
</comment>
<name>KDC_MYCTA</name>
<feature type="chain" id="PRO_0000333752" description="Alpha-keto-acid decarboxylase">
    <location>
        <begin position="1"/>
        <end position="560"/>
    </location>
</feature>
<feature type="region of interest" description="Thiamine pyrophosphate binding" evidence="1">
    <location>
        <begin position="396"/>
        <end position="478"/>
    </location>
</feature>
<feature type="binding site" evidence="1">
    <location>
        <position position="61"/>
    </location>
    <ligand>
        <name>thiamine diphosphate</name>
        <dbReference type="ChEBI" id="CHEBI:58937"/>
    </ligand>
</feature>
<feature type="binding site" evidence="1">
    <location>
        <position position="446"/>
    </location>
    <ligand>
        <name>Mg(2+)</name>
        <dbReference type="ChEBI" id="CHEBI:18420"/>
    </ligand>
</feature>
<feature type="binding site" evidence="1">
    <location>
        <position position="473"/>
    </location>
    <ligand>
        <name>Mg(2+)</name>
        <dbReference type="ChEBI" id="CHEBI:18420"/>
    </ligand>
</feature>
<feature type="binding site" evidence="1">
    <location>
        <position position="475"/>
    </location>
    <ligand>
        <name>Mg(2+)</name>
        <dbReference type="ChEBI" id="CHEBI:18420"/>
    </ligand>
</feature>
<organism>
    <name type="scientific">Mycobacterium tuberculosis (strain ATCC 25177 / H37Ra)</name>
    <dbReference type="NCBI Taxonomy" id="419947"/>
    <lineage>
        <taxon>Bacteria</taxon>
        <taxon>Bacillati</taxon>
        <taxon>Actinomycetota</taxon>
        <taxon>Actinomycetes</taxon>
        <taxon>Mycobacteriales</taxon>
        <taxon>Mycobacteriaceae</taxon>
        <taxon>Mycobacterium</taxon>
        <taxon>Mycobacterium tuberculosis complex</taxon>
    </lineage>
</organism>
<evidence type="ECO:0000250" key="1"/>
<evidence type="ECO:0000305" key="2"/>
<sequence>MTPQKSDACSDPVYTVGDYLLDRLAELGVSEIFGVPGDYNLQFLDHIVAHPTIRWVGSANELNAGYAADGYGRLRGMSAVVTTFGVGELSVTNAIAGSYAEHVPVVHIVGGPTKDAQGTRRALHHSLGDGDFEHFLRISREITCAQANLMPATAGREIDRVLSEVREQKRPGYILLSSDVARFPTEPPAAPLPRYPGGTSPRALSLFTKAAIELIADHQLTVLADLLVHRLQAVKELEALLAADVVPHATLMWGKSLLDESSPNFLGIYAGAASAERVRAAIEGAPVLVTAGVVFTDMVSGFFSQRIDPARTIDIGQYQSSVADQVFAPLEMSAALQALATILTGRGISSPPVVPPPAEPPPAMPARDEPLTQQMVWDRVCSALTPGNVVLADQGTSFYGMADHRLPQGVTFIGQPLWGSIGYTLPAAVGAAVAHPDRRTVLLIGDGAAQLTVQELGTFSREGLSPVIVVVNNDGYTVERAIHGETAPYNDIVSWNWTELPSALGVTNHLAFRAQTYGQLDDALTVAAARRDRMVLVEVVLPRLEIPRLLGQLVGSMAPQ</sequence>
<keyword id="KW-0210">Decarboxylase</keyword>
<keyword id="KW-0456">Lyase</keyword>
<keyword id="KW-0460">Magnesium</keyword>
<keyword id="KW-0479">Metal-binding</keyword>
<keyword id="KW-1185">Reference proteome</keyword>
<keyword id="KW-0786">Thiamine pyrophosphate</keyword>
<accession>A5U0P1</accession>